<gene>
    <name type="primary">prp1</name>
    <name type="synonym">zer1</name>
    <name type="ORF">SPBC6B1.07</name>
</gene>
<dbReference type="EMBL" id="D83743">
    <property type="protein sequence ID" value="BAA12094.1"/>
    <property type="molecule type" value="Genomic_DNA"/>
</dbReference>
<dbReference type="EMBL" id="D83659">
    <property type="protein sequence ID" value="BAA12033.1"/>
    <property type="molecule type" value="Genomic_DNA"/>
</dbReference>
<dbReference type="EMBL" id="CU329671">
    <property type="protein sequence ID" value="CAA17050.1"/>
    <property type="molecule type" value="Genomic_DNA"/>
</dbReference>
<dbReference type="PIR" id="T45158">
    <property type="entry name" value="T45158"/>
</dbReference>
<dbReference type="RefSeq" id="NP_596086.1">
    <property type="nucleotide sequence ID" value="NM_001022000.2"/>
</dbReference>
<dbReference type="SMR" id="Q12381"/>
<dbReference type="BioGRID" id="277699">
    <property type="interactions" value="138"/>
</dbReference>
<dbReference type="FunCoup" id="Q12381">
    <property type="interactions" value="663"/>
</dbReference>
<dbReference type="IntAct" id="Q12381">
    <property type="interactions" value="1"/>
</dbReference>
<dbReference type="STRING" id="284812.Q12381"/>
<dbReference type="iPTMnet" id="Q12381"/>
<dbReference type="PaxDb" id="4896-SPBC6B1.07.1"/>
<dbReference type="EnsemblFungi" id="SPBC6B1.07.1">
    <property type="protein sequence ID" value="SPBC6B1.07.1:pep"/>
    <property type="gene ID" value="SPBC6B1.07"/>
</dbReference>
<dbReference type="GeneID" id="2541185"/>
<dbReference type="KEGG" id="spo:2541185"/>
<dbReference type="PomBase" id="SPBC6B1.07">
    <property type="gene designation" value="prp1"/>
</dbReference>
<dbReference type="VEuPathDB" id="FungiDB:SPBC6B1.07"/>
<dbReference type="eggNOG" id="KOG0495">
    <property type="taxonomic scope" value="Eukaryota"/>
</dbReference>
<dbReference type="HOGENOM" id="CLU_007010_0_0_1"/>
<dbReference type="InParanoid" id="Q12381"/>
<dbReference type="OMA" id="DGWAWYY"/>
<dbReference type="PhylomeDB" id="Q12381"/>
<dbReference type="PRO" id="PR:Q12381"/>
<dbReference type="Proteomes" id="UP000002485">
    <property type="component" value="Chromosome II"/>
</dbReference>
<dbReference type="GO" id="GO:0071013">
    <property type="term" value="C:catalytic step 2 spliceosome"/>
    <property type="evidence" value="ECO:0000318"/>
    <property type="project" value="GO_Central"/>
</dbReference>
<dbReference type="GO" id="GO:0005634">
    <property type="term" value="C:nucleus"/>
    <property type="evidence" value="ECO:0007005"/>
    <property type="project" value="PomBase"/>
</dbReference>
<dbReference type="GO" id="GO:0046540">
    <property type="term" value="C:U4/U6 x U5 tri-snRNP complex"/>
    <property type="evidence" value="ECO:0000314"/>
    <property type="project" value="PomBase"/>
</dbReference>
<dbReference type="GO" id="GO:0045292">
    <property type="term" value="P:mRNA cis splicing, via spliceosome"/>
    <property type="evidence" value="ECO:0000315"/>
    <property type="project" value="PomBase"/>
</dbReference>
<dbReference type="GO" id="GO:0000398">
    <property type="term" value="P:mRNA splicing, via spliceosome"/>
    <property type="evidence" value="ECO:0000318"/>
    <property type="project" value="GO_Central"/>
</dbReference>
<dbReference type="GO" id="GO:0000244">
    <property type="term" value="P:spliceosomal tri-snRNP complex assembly"/>
    <property type="evidence" value="ECO:0000318"/>
    <property type="project" value="GO_Central"/>
</dbReference>
<dbReference type="FunFam" id="1.25.40.10:FF:000256">
    <property type="entry name" value="Probable pre-mRNA splicing factor prp1"/>
    <property type="match status" value="1"/>
</dbReference>
<dbReference type="Gene3D" id="1.25.40.10">
    <property type="entry name" value="Tetratricopeptide repeat domain"/>
    <property type="match status" value="3"/>
</dbReference>
<dbReference type="InterPro" id="IPR003107">
    <property type="entry name" value="HAT"/>
</dbReference>
<dbReference type="InterPro" id="IPR010491">
    <property type="entry name" value="PRP1_N"/>
</dbReference>
<dbReference type="InterPro" id="IPR045075">
    <property type="entry name" value="Syf1-like"/>
</dbReference>
<dbReference type="InterPro" id="IPR011990">
    <property type="entry name" value="TPR-like_helical_dom_sf"/>
</dbReference>
<dbReference type="InterPro" id="IPR019734">
    <property type="entry name" value="TPR_rpt"/>
</dbReference>
<dbReference type="PANTHER" id="PTHR11246">
    <property type="entry name" value="PRE-MRNA SPLICING FACTOR"/>
    <property type="match status" value="1"/>
</dbReference>
<dbReference type="PANTHER" id="PTHR11246:SF1">
    <property type="entry name" value="PRE-MRNA-PROCESSING FACTOR 6"/>
    <property type="match status" value="1"/>
</dbReference>
<dbReference type="Pfam" id="PF06424">
    <property type="entry name" value="PRP1_N"/>
    <property type="match status" value="1"/>
</dbReference>
<dbReference type="Pfam" id="PF13181">
    <property type="entry name" value="TPR_8"/>
    <property type="match status" value="1"/>
</dbReference>
<dbReference type="SMART" id="SM00386">
    <property type="entry name" value="HAT"/>
    <property type="match status" value="14"/>
</dbReference>
<dbReference type="SMART" id="SM00028">
    <property type="entry name" value="TPR"/>
    <property type="match status" value="4"/>
</dbReference>
<dbReference type="SUPFAM" id="SSF48452">
    <property type="entry name" value="TPR-like"/>
    <property type="match status" value="3"/>
</dbReference>
<evidence type="ECO:0000256" key="1">
    <source>
        <dbReference type="SAM" id="MobiDB-lite"/>
    </source>
</evidence>
<evidence type="ECO:0000269" key="2">
    <source>
    </source>
</evidence>
<evidence type="ECO:0000269" key="3">
    <source>
    </source>
</evidence>
<evidence type="ECO:0000269" key="4">
    <source>
    </source>
</evidence>
<evidence type="ECO:0000269" key="5">
    <source>
    </source>
</evidence>
<evidence type="ECO:0000269" key="6">
    <source ref="2"/>
</evidence>
<accession>Q12381</accession>
<keyword id="KW-0507">mRNA processing</keyword>
<keyword id="KW-0508">mRNA splicing</keyword>
<keyword id="KW-0539">Nucleus</keyword>
<keyword id="KW-0597">Phosphoprotein</keyword>
<keyword id="KW-1185">Reference proteome</keyword>
<keyword id="KW-0677">Repeat</keyword>
<comment type="function">
    <text evidence="2 5">Involved in pre-mRNA splicing. Interacts with prp6 and prp13. May also be involved in the regulation of the G0-G1/G2 transition. Required for pre-spliceosome formation, which is the first step of pre-mRNA splicing. This protein is associated with snRNP U5. Has a role in branch site-3' splice site selection. Associates with the branch site-3' splice 3'-exon region.</text>
</comment>
<comment type="subunit">
    <text evidence="2">Interacts with brr2 and spp42.</text>
</comment>
<comment type="subcellular location">
    <subcellularLocation>
        <location evidence="3">Nucleus</location>
    </subcellularLocation>
</comment>
<proteinExistence type="evidence at protein level"/>
<reference key="1">
    <citation type="journal article" date="1997" name="Genetics">
        <title>The prp1+ gene required for pre-mRNA splicing in Schizosaccharomyces pombe encodes a protein that contains TPR motifs and is similar to Prp6p of budding yeast.</title>
        <authorList>
            <person name="Urushiyama S."/>
            <person name="Tani T."/>
            <person name="Ohshima Y."/>
        </authorList>
    </citation>
    <scope>NUCLEOTIDE SEQUENCE [GENOMIC DNA]</scope>
    <scope>FUNCTION</scope>
    <scope>MUTAGENESIS OF LEU-616</scope>
</reference>
<reference key="2">
    <citation type="submission" date="1996-03" db="EMBL/GenBank/DDBJ databases">
        <title>Fission yeast TPR gene involved in G0 transition.</title>
        <authorList>
            <person name="Okazaki K."/>
            <person name="Okayama H."/>
        </authorList>
    </citation>
    <scope>NUCLEOTIDE SEQUENCE [GENOMIC DNA]</scope>
    <scope>MUTAGENESIS OF PRO-875</scope>
</reference>
<reference key="3">
    <citation type="journal article" date="2002" name="Nature">
        <title>The genome sequence of Schizosaccharomyces pombe.</title>
        <authorList>
            <person name="Wood V."/>
            <person name="Gwilliam R."/>
            <person name="Rajandream M.A."/>
            <person name="Lyne M.H."/>
            <person name="Lyne R."/>
            <person name="Stewart A."/>
            <person name="Sgouros J.G."/>
            <person name="Peat N."/>
            <person name="Hayles J."/>
            <person name="Baker S.G."/>
            <person name="Basham D."/>
            <person name="Bowman S."/>
            <person name="Brooks K."/>
            <person name="Brown D."/>
            <person name="Brown S."/>
            <person name="Chillingworth T."/>
            <person name="Churcher C.M."/>
            <person name="Collins M."/>
            <person name="Connor R."/>
            <person name="Cronin A."/>
            <person name="Davis P."/>
            <person name="Feltwell T."/>
            <person name="Fraser A."/>
            <person name="Gentles S."/>
            <person name="Goble A."/>
            <person name="Hamlin N."/>
            <person name="Harris D.E."/>
            <person name="Hidalgo J."/>
            <person name="Hodgson G."/>
            <person name="Holroyd S."/>
            <person name="Hornsby T."/>
            <person name="Howarth S."/>
            <person name="Huckle E.J."/>
            <person name="Hunt S."/>
            <person name="Jagels K."/>
            <person name="James K.D."/>
            <person name="Jones L."/>
            <person name="Jones M."/>
            <person name="Leather S."/>
            <person name="McDonald S."/>
            <person name="McLean J."/>
            <person name="Mooney P."/>
            <person name="Moule S."/>
            <person name="Mungall K.L."/>
            <person name="Murphy L.D."/>
            <person name="Niblett D."/>
            <person name="Odell C."/>
            <person name="Oliver K."/>
            <person name="O'Neil S."/>
            <person name="Pearson D."/>
            <person name="Quail M.A."/>
            <person name="Rabbinowitsch E."/>
            <person name="Rutherford K.M."/>
            <person name="Rutter S."/>
            <person name="Saunders D."/>
            <person name="Seeger K."/>
            <person name="Sharp S."/>
            <person name="Skelton J."/>
            <person name="Simmonds M.N."/>
            <person name="Squares R."/>
            <person name="Squares S."/>
            <person name="Stevens K."/>
            <person name="Taylor K."/>
            <person name="Taylor R.G."/>
            <person name="Tivey A."/>
            <person name="Walsh S.V."/>
            <person name="Warren T."/>
            <person name="Whitehead S."/>
            <person name="Woodward J.R."/>
            <person name="Volckaert G."/>
            <person name="Aert R."/>
            <person name="Robben J."/>
            <person name="Grymonprez B."/>
            <person name="Weltjens I."/>
            <person name="Vanstreels E."/>
            <person name="Rieger M."/>
            <person name="Schaefer M."/>
            <person name="Mueller-Auer S."/>
            <person name="Gabel C."/>
            <person name="Fuchs M."/>
            <person name="Duesterhoeft A."/>
            <person name="Fritzc C."/>
            <person name="Holzer E."/>
            <person name="Moestl D."/>
            <person name="Hilbert H."/>
            <person name="Borzym K."/>
            <person name="Langer I."/>
            <person name="Beck A."/>
            <person name="Lehrach H."/>
            <person name="Reinhardt R."/>
            <person name="Pohl T.M."/>
            <person name="Eger P."/>
            <person name="Zimmermann W."/>
            <person name="Wedler H."/>
            <person name="Wambutt R."/>
            <person name="Purnelle B."/>
            <person name="Goffeau A."/>
            <person name="Cadieu E."/>
            <person name="Dreano S."/>
            <person name="Gloux S."/>
            <person name="Lelaure V."/>
            <person name="Mottier S."/>
            <person name="Galibert F."/>
            <person name="Aves S.J."/>
            <person name="Xiang Z."/>
            <person name="Hunt C."/>
            <person name="Moore K."/>
            <person name="Hurst S.M."/>
            <person name="Lucas M."/>
            <person name="Rochet M."/>
            <person name="Gaillardin C."/>
            <person name="Tallada V.A."/>
            <person name="Garzon A."/>
            <person name="Thode G."/>
            <person name="Daga R.R."/>
            <person name="Cruzado L."/>
            <person name="Jimenez J."/>
            <person name="Sanchez M."/>
            <person name="del Rey F."/>
            <person name="Benito J."/>
            <person name="Dominguez A."/>
            <person name="Revuelta J.L."/>
            <person name="Moreno S."/>
            <person name="Armstrong J."/>
            <person name="Forsburg S.L."/>
            <person name="Cerutti L."/>
            <person name="Lowe T."/>
            <person name="McCombie W.R."/>
            <person name="Paulsen I."/>
            <person name="Potashkin J."/>
            <person name="Shpakovski G.V."/>
            <person name="Ussery D."/>
            <person name="Barrell B.G."/>
            <person name="Nurse P."/>
        </authorList>
    </citation>
    <scope>NUCLEOTIDE SEQUENCE [LARGE SCALE GENOMIC DNA]</scope>
    <source>
        <strain>972 / ATCC 24843</strain>
    </source>
</reference>
<reference key="4">
    <citation type="journal article" date="2005" name="Curr. Genet.">
        <title>Multiple genetic and biochemical interactions of Brr2, Prp8, Prp31, Prp1 and Prp4 kinase suggest a function in the control of the activation of spliceosomes in Schizosaccharomyces pombe.</title>
        <authorList>
            <person name="Bottner C.A."/>
            <person name="Schmidt H."/>
            <person name="Vogel S."/>
            <person name="Michele M."/>
            <person name="Kaeufer N.F."/>
        </authorList>
    </citation>
    <scope>FUNCTION</scope>
    <scope>INTERACTION WITH BRR2 AND SPP42</scope>
</reference>
<reference key="5">
    <citation type="journal article" date="2006" name="Nat. Biotechnol.">
        <title>ORFeome cloning and global analysis of protein localization in the fission yeast Schizosaccharomyces pombe.</title>
        <authorList>
            <person name="Matsuyama A."/>
            <person name="Arai R."/>
            <person name="Yashiroda Y."/>
            <person name="Shirai A."/>
            <person name="Kamata A."/>
            <person name="Sekido S."/>
            <person name="Kobayashi Y."/>
            <person name="Hashimoto A."/>
            <person name="Hamamoto M."/>
            <person name="Hiraoka Y."/>
            <person name="Horinouchi S."/>
            <person name="Yoshida M."/>
        </authorList>
    </citation>
    <scope>SUBCELLULAR LOCATION [LARGE SCALE ANALYSIS]</scope>
</reference>
<reference key="6">
    <citation type="journal article" date="2008" name="J. Proteome Res.">
        <title>Phosphoproteome analysis of fission yeast.</title>
        <authorList>
            <person name="Wilson-Grady J.T."/>
            <person name="Villen J."/>
            <person name="Gygi S.P."/>
        </authorList>
    </citation>
    <scope>PHOSPHORYLATION [LARGE SCALE ANALYSIS] AT SER-235</scope>
    <scope>IDENTIFICATION BY MASS SPECTROMETRY</scope>
</reference>
<protein>
    <recommendedName>
        <fullName>Pre-mRNA-splicing factor prp1</fullName>
    </recommendedName>
</protein>
<name>PRP1_SCHPO</name>
<organism>
    <name type="scientific">Schizosaccharomyces pombe (strain 972 / ATCC 24843)</name>
    <name type="common">Fission yeast</name>
    <dbReference type="NCBI Taxonomy" id="284812"/>
    <lineage>
        <taxon>Eukaryota</taxon>
        <taxon>Fungi</taxon>
        <taxon>Dikarya</taxon>
        <taxon>Ascomycota</taxon>
        <taxon>Taphrinomycotina</taxon>
        <taxon>Schizosaccharomycetes</taxon>
        <taxon>Schizosaccharomycetales</taxon>
        <taxon>Schizosaccharomycetaceae</taxon>
        <taxon>Schizosaccharomyces</taxon>
    </lineage>
</organism>
<sequence>MANFYPDFLNMQPPPNYVAGLGRGATGFTTRSDLGPAQELPSQESIKAAIEQRKSEIEEEEDIDPRYQDPDNEVALFATAPYDHEDEEADKIYQSVEEHLSKRRKSQREKQEQLQKEKYEKENPKVSSQFADLKRGLSTLTDEDWNNIPEPGDLTRKKRTKQPRRERFYATSDFVLASARNENQAISNFAVDTQAGTETPDMNGTKTNFVEIGAARDKVLGIKLAQASSNLTSPSTIDPKGYLTSLNSMVPKNANDLGDIRKARKLLQSVIETNPKHASGWVAAARLEEVANKLSQAQSLILKGCENCSRSEDVWLEAIRLHPAAEAKVIIANAVKKLPKSVTLWLEAEKLENQAQHKKRIIKKALEFNPTSVSLWKEAVNLEEEVDNARILLARAVELIPMSIDLWLALARLETYENAKKVLNKARQTIRTSHEVWIAAARLEEQQGNVSRVEKIMARGVSELQATGGMLQRDQWLSEAEKCETEGAVITAQAIINTCLGVGLDEEDQFDTWLDDAQSFIARKCIDCARAVFAFSLRVYPKSEKLWLRAVELEKLYGTTESVCSILEKAVESCPKAEILWLLYAKERKNVNDIAGARNILGRAFEYNSNSEEIWLAAVRIEFVNNENERARKLLARARIESGTERIWTKSISLERILDEKDRALQLLENALKIYPHYDKLYMMKGQIFEDKEQIELARDAYLAGTKVCPYSIPLWLLLAKLEEKQSVIRARVVFDRAKVKNPKNEFLWLELIKMELRAGNISQVRAALAKALQECPSSGLLWTEAIWLEPRAQRKTRATDALRKCEGNAHLLCTIARMLWLEKKADKARSWFLKAVKADQDNGDVWCWFYKYSLEAGNEDQQKEVLTSFETADPHHGYFWPSITKDIKNSRKTPQELLHLAINVL</sequence>
<feature type="chain" id="PRO_0000205755" description="Pre-mRNA-splicing factor prp1">
    <location>
        <begin position="1"/>
        <end position="906"/>
    </location>
</feature>
<feature type="repeat" description="HAT 1">
    <location>
        <begin position="258"/>
        <end position="290"/>
    </location>
</feature>
<feature type="repeat" description="HAT 2">
    <location>
        <begin position="322"/>
        <end position="353"/>
    </location>
</feature>
<feature type="repeat" description="HAT 3">
    <location>
        <begin position="354"/>
        <end position="384"/>
    </location>
</feature>
<feature type="repeat" description="HAT 4">
    <location>
        <begin position="385"/>
        <end position="416"/>
    </location>
</feature>
<feature type="repeat" description="HAT 5">
    <location>
        <begin position="524"/>
        <end position="556"/>
    </location>
</feature>
<feature type="repeat" description="HAT 6">
    <location>
        <begin position="558"/>
        <end position="590"/>
    </location>
</feature>
<feature type="repeat" description="HAT 7">
    <location>
        <begin position="592"/>
        <end position="624"/>
    </location>
</feature>
<feature type="repeat" description="HAT 8">
    <location>
        <begin position="693"/>
        <end position="725"/>
    </location>
</feature>
<feature type="repeat" description="HAT 9">
    <location>
        <begin position="726"/>
        <end position="758"/>
    </location>
</feature>
<feature type="repeat" description="HAT 10">
    <location>
        <begin position="760"/>
        <end position="792"/>
    </location>
</feature>
<feature type="repeat" description="HAT 11">
    <location>
        <begin position="824"/>
        <end position="856"/>
    </location>
</feature>
<feature type="region of interest" description="Disordered" evidence="1">
    <location>
        <begin position="50"/>
        <end position="129"/>
    </location>
</feature>
<feature type="region of interest" description="Disordered" evidence="1">
    <location>
        <begin position="142"/>
        <end position="164"/>
    </location>
</feature>
<feature type="compositionally biased region" description="Basic and acidic residues" evidence="1">
    <location>
        <begin position="108"/>
        <end position="124"/>
    </location>
</feature>
<feature type="modified residue" description="Phosphoserine" evidence="4">
    <location>
        <position position="235"/>
    </location>
</feature>
<feature type="mutagenesis site" description="Defect in poly(A)+ RNA nuclear export." evidence="5">
    <original>L</original>
    <variation>I</variation>
    <location>
        <position position="616"/>
    </location>
</feature>
<feature type="mutagenesis site" description="In zer1-C5; temperature-sensitive growth arrest showing G0 state like terminal phenotype." evidence="6">
    <original>P</original>
    <variation>L</variation>
    <location>
        <position position="875"/>
    </location>
</feature>